<protein>
    <recommendedName>
        <fullName evidence="1">GTP cyclohydrolase-2</fullName>
        <ecNumber evidence="1">3.5.4.25</ecNumber>
    </recommendedName>
    <alternativeName>
        <fullName evidence="1">GTP cyclohydrolase II</fullName>
    </alternativeName>
</protein>
<accession>Q5E5L2</accession>
<comment type="function">
    <text evidence="1">Catalyzes the conversion of GTP to 2,5-diamino-6-ribosylamino-4(3H)-pyrimidinone 5'-phosphate (DARP), formate and pyrophosphate.</text>
</comment>
<comment type="catalytic activity">
    <reaction evidence="1">
        <text>GTP + 4 H2O = 2,5-diamino-6-hydroxy-4-(5-phosphoribosylamino)-pyrimidine + formate + 2 phosphate + 3 H(+)</text>
        <dbReference type="Rhea" id="RHEA:23704"/>
        <dbReference type="ChEBI" id="CHEBI:15377"/>
        <dbReference type="ChEBI" id="CHEBI:15378"/>
        <dbReference type="ChEBI" id="CHEBI:15740"/>
        <dbReference type="ChEBI" id="CHEBI:37565"/>
        <dbReference type="ChEBI" id="CHEBI:43474"/>
        <dbReference type="ChEBI" id="CHEBI:58614"/>
        <dbReference type="EC" id="3.5.4.25"/>
    </reaction>
</comment>
<comment type="cofactor">
    <cofactor evidence="1">
        <name>Zn(2+)</name>
        <dbReference type="ChEBI" id="CHEBI:29105"/>
    </cofactor>
    <text evidence="1">Binds 1 zinc ion per subunit.</text>
</comment>
<comment type="pathway">
    <text evidence="1">Cofactor biosynthesis; riboflavin biosynthesis; 5-amino-6-(D-ribitylamino)uracil from GTP: step 1/4.</text>
</comment>
<comment type="similarity">
    <text evidence="1">Belongs to the GTP cyclohydrolase II family.</text>
</comment>
<organism>
    <name type="scientific">Aliivibrio fischeri (strain ATCC 700601 / ES114)</name>
    <name type="common">Vibrio fischeri</name>
    <dbReference type="NCBI Taxonomy" id="312309"/>
    <lineage>
        <taxon>Bacteria</taxon>
        <taxon>Pseudomonadati</taxon>
        <taxon>Pseudomonadota</taxon>
        <taxon>Gammaproteobacteria</taxon>
        <taxon>Vibrionales</taxon>
        <taxon>Vibrionaceae</taxon>
        <taxon>Aliivibrio</taxon>
    </lineage>
</organism>
<sequence>MANVRARIELMVGQKSNIPAEMLSFEGLETDKEHVAVVFNQADKHQSTPLVRMHSECLTGDVFHSSRCDCGEQLEETINRMSESGGIILYLRQEGRGIGLYNKLDAYELQSQGMNTYEANNHLGFGDDLRDFKEAAQMLEALNISKIKLVTNNPKKIKDIQNYGIEIDEVVNTHAHVKQGNEHYLHSKAAHGHKLNFDK</sequence>
<reference key="1">
    <citation type="journal article" date="2005" name="Proc. Natl. Acad. Sci. U.S.A.">
        <title>Complete genome sequence of Vibrio fischeri: a symbiotic bacterium with pathogenic congeners.</title>
        <authorList>
            <person name="Ruby E.G."/>
            <person name="Urbanowski M."/>
            <person name="Campbell J."/>
            <person name="Dunn A."/>
            <person name="Faini M."/>
            <person name="Gunsalus R."/>
            <person name="Lostroh P."/>
            <person name="Lupp C."/>
            <person name="McCann J."/>
            <person name="Millikan D."/>
            <person name="Schaefer A."/>
            <person name="Stabb E."/>
            <person name="Stevens A."/>
            <person name="Visick K."/>
            <person name="Whistler C."/>
            <person name="Greenberg E.P."/>
        </authorList>
    </citation>
    <scope>NUCLEOTIDE SEQUENCE [LARGE SCALE GENOMIC DNA]</scope>
    <source>
        <strain>ATCC 700601 / ES114</strain>
    </source>
</reference>
<name>RIBA_ALIF1</name>
<evidence type="ECO:0000255" key="1">
    <source>
        <dbReference type="HAMAP-Rule" id="MF_00179"/>
    </source>
</evidence>
<dbReference type="EC" id="3.5.4.25" evidence="1"/>
<dbReference type="EMBL" id="CP000020">
    <property type="protein sequence ID" value="AAW85684.1"/>
    <property type="molecule type" value="Genomic_DNA"/>
</dbReference>
<dbReference type="RefSeq" id="WP_011261809.1">
    <property type="nucleotide sequence ID" value="NC_006840.2"/>
</dbReference>
<dbReference type="RefSeq" id="YP_204572.1">
    <property type="nucleotide sequence ID" value="NC_006840.2"/>
</dbReference>
<dbReference type="SMR" id="Q5E5L2"/>
<dbReference type="STRING" id="312309.VF_1189"/>
<dbReference type="EnsemblBacteria" id="AAW85684">
    <property type="protein sequence ID" value="AAW85684"/>
    <property type="gene ID" value="VF_1189"/>
</dbReference>
<dbReference type="GeneID" id="54163860"/>
<dbReference type="KEGG" id="vfi:VF_1189"/>
<dbReference type="PATRIC" id="fig|312309.11.peg.1196"/>
<dbReference type="eggNOG" id="COG0807">
    <property type="taxonomic scope" value="Bacteria"/>
</dbReference>
<dbReference type="HOGENOM" id="CLU_020273_2_1_6"/>
<dbReference type="OrthoDB" id="9793111at2"/>
<dbReference type="UniPathway" id="UPA00275">
    <property type="reaction ID" value="UER00400"/>
</dbReference>
<dbReference type="Proteomes" id="UP000000537">
    <property type="component" value="Chromosome I"/>
</dbReference>
<dbReference type="GO" id="GO:0005829">
    <property type="term" value="C:cytosol"/>
    <property type="evidence" value="ECO:0007669"/>
    <property type="project" value="TreeGrafter"/>
</dbReference>
<dbReference type="GO" id="GO:0005525">
    <property type="term" value="F:GTP binding"/>
    <property type="evidence" value="ECO:0007669"/>
    <property type="project" value="UniProtKB-KW"/>
</dbReference>
<dbReference type="GO" id="GO:0003935">
    <property type="term" value="F:GTP cyclohydrolase II activity"/>
    <property type="evidence" value="ECO:0007669"/>
    <property type="project" value="UniProtKB-UniRule"/>
</dbReference>
<dbReference type="GO" id="GO:0008270">
    <property type="term" value="F:zinc ion binding"/>
    <property type="evidence" value="ECO:0007669"/>
    <property type="project" value="UniProtKB-UniRule"/>
</dbReference>
<dbReference type="GO" id="GO:0009231">
    <property type="term" value="P:riboflavin biosynthetic process"/>
    <property type="evidence" value="ECO:0007669"/>
    <property type="project" value="UniProtKB-UniRule"/>
</dbReference>
<dbReference type="CDD" id="cd00641">
    <property type="entry name" value="GTP_cyclohydro2"/>
    <property type="match status" value="1"/>
</dbReference>
<dbReference type="FunFam" id="3.40.50.10990:FF:000001">
    <property type="entry name" value="Riboflavin biosynthesis protein RibBA"/>
    <property type="match status" value="1"/>
</dbReference>
<dbReference type="Gene3D" id="3.40.50.10990">
    <property type="entry name" value="GTP cyclohydrolase II"/>
    <property type="match status" value="1"/>
</dbReference>
<dbReference type="HAMAP" id="MF_00179">
    <property type="entry name" value="RibA"/>
    <property type="match status" value="1"/>
</dbReference>
<dbReference type="InterPro" id="IPR032677">
    <property type="entry name" value="GTP_cyclohydro_II"/>
</dbReference>
<dbReference type="InterPro" id="IPR000926">
    <property type="entry name" value="RibA"/>
</dbReference>
<dbReference type="InterPro" id="IPR036144">
    <property type="entry name" value="RibA-like_sf"/>
</dbReference>
<dbReference type="NCBIfam" id="NF001591">
    <property type="entry name" value="PRK00393.1"/>
    <property type="match status" value="1"/>
</dbReference>
<dbReference type="PANTHER" id="PTHR21327:SF18">
    <property type="entry name" value="3,4-DIHYDROXY-2-BUTANONE 4-PHOSPHATE SYNTHASE"/>
    <property type="match status" value="1"/>
</dbReference>
<dbReference type="PANTHER" id="PTHR21327">
    <property type="entry name" value="GTP CYCLOHYDROLASE II-RELATED"/>
    <property type="match status" value="1"/>
</dbReference>
<dbReference type="Pfam" id="PF00925">
    <property type="entry name" value="GTP_cyclohydro2"/>
    <property type="match status" value="1"/>
</dbReference>
<dbReference type="SUPFAM" id="SSF142695">
    <property type="entry name" value="RibA-like"/>
    <property type="match status" value="1"/>
</dbReference>
<proteinExistence type="inferred from homology"/>
<feature type="chain" id="PRO_1000040593" description="GTP cyclohydrolase-2">
    <location>
        <begin position="1"/>
        <end position="199"/>
    </location>
</feature>
<feature type="active site" description="Proton acceptor" evidence="1">
    <location>
        <position position="128"/>
    </location>
</feature>
<feature type="active site" description="Nucleophile" evidence="1">
    <location>
        <position position="130"/>
    </location>
</feature>
<feature type="binding site" evidence="1">
    <location>
        <begin position="52"/>
        <end position="56"/>
    </location>
    <ligand>
        <name>GTP</name>
        <dbReference type="ChEBI" id="CHEBI:37565"/>
    </ligand>
</feature>
<feature type="binding site" evidence="1">
    <location>
        <position position="57"/>
    </location>
    <ligand>
        <name>Zn(2+)</name>
        <dbReference type="ChEBI" id="CHEBI:29105"/>
        <note>catalytic</note>
    </ligand>
</feature>
<feature type="binding site" evidence="1">
    <location>
        <position position="68"/>
    </location>
    <ligand>
        <name>Zn(2+)</name>
        <dbReference type="ChEBI" id="CHEBI:29105"/>
        <note>catalytic</note>
    </ligand>
</feature>
<feature type="binding site" evidence="1">
    <location>
        <position position="70"/>
    </location>
    <ligand>
        <name>Zn(2+)</name>
        <dbReference type="ChEBI" id="CHEBI:29105"/>
        <note>catalytic</note>
    </ligand>
</feature>
<feature type="binding site" evidence="1">
    <location>
        <position position="73"/>
    </location>
    <ligand>
        <name>GTP</name>
        <dbReference type="ChEBI" id="CHEBI:37565"/>
    </ligand>
</feature>
<feature type="binding site" evidence="1">
    <location>
        <begin position="94"/>
        <end position="96"/>
    </location>
    <ligand>
        <name>GTP</name>
        <dbReference type="ChEBI" id="CHEBI:37565"/>
    </ligand>
</feature>
<feature type="binding site" evidence="1">
    <location>
        <position position="116"/>
    </location>
    <ligand>
        <name>GTP</name>
        <dbReference type="ChEBI" id="CHEBI:37565"/>
    </ligand>
</feature>
<feature type="binding site" evidence="1">
    <location>
        <position position="151"/>
    </location>
    <ligand>
        <name>GTP</name>
        <dbReference type="ChEBI" id="CHEBI:37565"/>
    </ligand>
</feature>
<feature type="binding site" evidence="1">
    <location>
        <position position="156"/>
    </location>
    <ligand>
        <name>GTP</name>
        <dbReference type="ChEBI" id="CHEBI:37565"/>
    </ligand>
</feature>
<keyword id="KW-0342">GTP-binding</keyword>
<keyword id="KW-0378">Hydrolase</keyword>
<keyword id="KW-0479">Metal-binding</keyword>
<keyword id="KW-0547">Nucleotide-binding</keyword>
<keyword id="KW-1185">Reference proteome</keyword>
<keyword id="KW-0686">Riboflavin biosynthesis</keyword>
<keyword id="KW-0862">Zinc</keyword>
<gene>
    <name evidence="1" type="primary">ribA</name>
    <name type="ordered locus">VF_1189</name>
</gene>